<protein>
    <recommendedName>
        <fullName>Putative ATP-dependent helicase IRC3</fullName>
        <ecNumber>3.6.4.-</ecNumber>
    </recommendedName>
    <alternativeName>
        <fullName>Increased recombination centers protein 3</fullName>
    </alternativeName>
</protein>
<comment type="subcellular location">
    <subcellularLocation>
        <location evidence="3">Mitochondrion</location>
    </subcellularLocation>
</comment>
<comment type="miscellaneous">
    <text evidence="4">Present with 172 molecules/cell in log phase SD medium.</text>
</comment>
<comment type="similarity">
    <text evidence="5">Belongs to the helicase family. IRC3 subfamily.</text>
</comment>
<keyword id="KW-0067">ATP-binding</keyword>
<keyword id="KW-0347">Helicase</keyword>
<keyword id="KW-0378">Hydrolase</keyword>
<keyword id="KW-0496">Mitochondrion</keyword>
<keyword id="KW-0547">Nucleotide-binding</keyword>
<keyword id="KW-1185">Reference proteome</keyword>
<accession>Q06683</accession>
<accession>D6VSW4</accession>
<organism>
    <name type="scientific">Saccharomyces cerevisiae (strain ATCC 204508 / S288c)</name>
    <name type="common">Baker's yeast</name>
    <dbReference type="NCBI Taxonomy" id="559292"/>
    <lineage>
        <taxon>Eukaryota</taxon>
        <taxon>Fungi</taxon>
        <taxon>Dikarya</taxon>
        <taxon>Ascomycota</taxon>
        <taxon>Saccharomycotina</taxon>
        <taxon>Saccharomycetes</taxon>
        <taxon>Saccharomycetales</taxon>
        <taxon>Saccharomycetaceae</taxon>
        <taxon>Saccharomyces</taxon>
    </lineage>
</organism>
<dbReference type="EC" id="3.6.4.-"/>
<dbReference type="EMBL" id="U32517">
    <property type="protein sequence ID" value="AAB64767.1"/>
    <property type="molecule type" value="Genomic_DNA"/>
</dbReference>
<dbReference type="EMBL" id="BK006938">
    <property type="protein sequence ID" value="DAA12174.1"/>
    <property type="molecule type" value="Genomic_DNA"/>
</dbReference>
<dbReference type="PIR" id="S59797">
    <property type="entry name" value="S59797"/>
</dbReference>
<dbReference type="RefSeq" id="NP_010619.3">
    <property type="nucleotide sequence ID" value="NM_001180640.3"/>
</dbReference>
<dbReference type="SMR" id="Q06683"/>
<dbReference type="BioGRID" id="32389">
    <property type="interactions" value="82"/>
</dbReference>
<dbReference type="DIP" id="DIP-5241N"/>
<dbReference type="FunCoup" id="Q06683">
    <property type="interactions" value="40"/>
</dbReference>
<dbReference type="IntAct" id="Q06683">
    <property type="interactions" value="2"/>
</dbReference>
<dbReference type="MINT" id="Q06683"/>
<dbReference type="STRING" id="4932.YDR332W"/>
<dbReference type="GlyGen" id="Q06683">
    <property type="glycosylation" value="2 sites, 1 O-linked glycan (2 sites)"/>
</dbReference>
<dbReference type="iPTMnet" id="Q06683"/>
<dbReference type="PaxDb" id="4932-YDR332W"/>
<dbReference type="PeptideAtlas" id="Q06683"/>
<dbReference type="EnsemblFungi" id="YDR332W_mRNA">
    <property type="protein sequence ID" value="YDR332W"/>
    <property type="gene ID" value="YDR332W"/>
</dbReference>
<dbReference type="GeneID" id="851932"/>
<dbReference type="KEGG" id="sce:YDR332W"/>
<dbReference type="AGR" id="SGD:S000002740"/>
<dbReference type="SGD" id="S000002740">
    <property type="gene designation" value="IRC3"/>
</dbReference>
<dbReference type="VEuPathDB" id="FungiDB:YDR332W"/>
<dbReference type="eggNOG" id="ENOG502QT4U">
    <property type="taxonomic scope" value="Eukaryota"/>
</dbReference>
<dbReference type="HOGENOM" id="CLU_014765_0_0_1"/>
<dbReference type="InParanoid" id="Q06683"/>
<dbReference type="OMA" id="DKWLCEG"/>
<dbReference type="OrthoDB" id="16911at2759"/>
<dbReference type="BioCyc" id="YEAST:G3O-29888-MONOMER"/>
<dbReference type="BioGRID-ORCS" id="851932">
    <property type="hits" value="2 hits in 10 CRISPR screens"/>
</dbReference>
<dbReference type="PRO" id="PR:Q06683"/>
<dbReference type="Proteomes" id="UP000002311">
    <property type="component" value="Chromosome IV"/>
</dbReference>
<dbReference type="RNAct" id="Q06683">
    <property type="molecule type" value="protein"/>
</dbReference>
<dbReference type="GO" id="GO:0005759">
    <property type="term" value="C:mitochondrial matrix"/>
    <property type="evidence" value="ECO:0000314"/>
    <property type="project" value="SGD"/>
</dbReference>
<dbReference type="GO" id="GO:0005739">
    <property type="term" value="C:mitochondrion"/>
    <property type="evidence" value="ECO:0007005"/>
    <property type="project" value="SGD"/>
</dbReference>
<dbReference type="GO" id="GO:0005524">
    <property type="term" value="F:ATP binding"/>
    <property type="evidence" value="ECO:0007669"/>
    <property type="project" value="UniProtKB-KW"/>
</dbReference>
<dbReference type="GO" id="GO:0036121">
    <property type="term" value="F:double-stranded DNA helicase activity"/>
    <property type="evidence" value="ECO:0000314"/>
    <property type="project" value="SGD"/>
</dbReference>
<dbReference type="GO" id="GO:0061749">
    <property type="term" value="F:forked DNA-dependent helicase activity"/>
    <property type="evidence" value="ECO:0000314"/>
    <property type="project" value="SGD"/>
</dbReference>
<dbReference type="GO" id="GO:0016787">
    <property type="term" value="F:hydrolase activity"/>
    <property type="evidence" value="ECO:0007669"/>
    <property type="project" value="UniProtKB-KW"/>
</dbReference>
<dbReference type="GO" id="GO:0000403">
    <property type="term" value="F:Y-form DNA binding"/>
    <property type="evidence" value="ECO:0000314"/>
    <property type="project" value="SGD"/>
</dbReference>
<dbReference type="GO" id="GO:0032042">
    <property type="term" value="P:mitochondrial DNA metabolic process"/>
    <property type="evidence" value="ECO:0000315"/>
    <property type="project" value="SGD"/>
</dbReference>
<dbReference type="GO" id="GO:1905082">
    <property type="term" value="P:regulation of mitochondrial translational elongation"/>
    <property type="evidence" value="ECO:0000315"/>
    <property type="project" value="SGD"/>
</dbReference>
<dbReference type="CDD" id="cd18032">
    <property type="entry name" value="DEXHc_RE_I_III_res"/>
    <property type="match status" value="1"/>
</dbReference>
<dbReference type="CDD" id="cd18799">
    <property type="entry name" value="SF2_C_EcoAI-like"/>
    <property type="match status" value="1"/>
</dbReference>
<dbReference type="FunFam" id="3.40.50.300:FF:002546">
    <property type="entry name" value="Irc3p"/>
    <property type="match status" value="1"/>
</dbReference>
<dbReference type="Gene3D" id="3.40.50.300">
    <property type="entry name" value="P-loop containing nucleotide triphosphate hydrolases"/>
    <property type="match status" value="2"/>
</dbReference>
<dbReference type="InterPro" id="IPR006935">
    <property type="entry name" value="Helicase/UvrB_N"/>
</dbReference>
<dbReference type="InterPro" id="IPR014001">
    <property type="entry name" value="Helicase_ATP-bd"/>
</dbReference>
<dbReference type="InterPro" id="IPR001650">
    <property type="entry name" value="Helicase_C-like"/>
</dbReference>
<dbReference type="InterPro" id="IPR050742">
    <property type="entry name" value="Helicase_Restrict-Modif_Enz"/>
</dbReference>
<dbReference type="InterPro" id="IPR027417">
    <property type="entry name" value="P-loop_NTPase"/>
</dbReference>
<dbReference type="PANTHER" id="PTHR47396:SF1">
    <property type="entry name" value="ATP-DEPENDENT HELICASE IRC3-RELATED"/>
    <property type="match status" value="1"/>
</dbReference>
<dbReference type="PANTHER" id="PTHR47396">
    <property type="entry name" value="TYPE I RESTRICTION ENZYME ECOKI R PROTEIN"/>
    <property type="match status" value="1"/>
</dbReference>
<dbReference type="Pfam" id="PF00271">
    <property type="entry name" value="Helicase_C"/>
    <property type="match status" value="1"/>
</dbReference>
<dbReference type="Pfam" id="PF04851">
    <property type="entry name" value="ResIII"/>
    <property type="match status" value="1"/>
</dbReference>
<dbReference type="SMART" id="SM00487">
    <property type="entry name" value="DEXDc"/>
    <property type="match status" value="1"/>
</dbReference>
<dbReference type="SMART" id="SM00490">
    <property type="entry name" value="HELICc"/>
    <property type="match status" value="1"/>
</dbReference>
<dbReference type="SUPFAM" id="SSF52540">
    <property type="entry name" value="P-loop containing nucleoside triphosphate hydrolases"/>
    <property type="match status" value="1"/>
</dbReference>
<dbReference type="PROSITE" id="PS51192">
    <property type="entry name" value="HELICASE_ATP_BIND_1"/>
    <property type="match status" value="1"/>
</dbReference>
<dbReference type="PROSITE" id="PS51194">
    <property type="entry name" value="HELICASE_CTER"/>
    <property type="match status" value="1"/>
</dbReference>
<sequence length="689" mass="78546">MTSTLATRLSTYSISLILQRIKIIKRCYSAPVLRDYQQDAIDACVNSIRQGTKRIGVSLATGGGKTVIFSNLINQLRQNYFKERQGNFKSLILVHRRELALQATATLKKIFPDLKVHIEMGKYDCDIEDSDVIVASVQTLIRRLHKYDTNSVNLIIIDEAHHSVANSYRSILDHFKASTAETKIPVIGFSATFERADKRALSMVMDKIVYHRGILEMIDDKWLCEAKFTSVKIEADLSDVKSTADDFQLAPLSSLMNTKEINEVILKTYLHKKQEKSLKSTLLFGVDKAHVQSLHKLFKDNGINTDYVTSDTKQIERDNIIQKFKNGETEVLMNCGIFTEGTDMPNIDCILLCRPTKSRSLLIQMIGRGLRLHHSKDHCHIIDFIGASSVGVVSAPTLLGIRSDDIEFDDATVEDLKAIQGEIIAKQQKIDERLRALFQTDEAAMENVTERNSVADWIHSANSVDLTLCSFDSFRNFTQSNNSYPSGKEFDEASEAVKEMELLMNSQYPWVKFASNAWGLPLKGKNHLRIYKEKSEDKLSMVYHLKMYRQLPCFITNKYADYVPKSIIKDANLWNVMSKVEKIINTLNSDLEGQTMQYQAISSKYSKWRQTVPTSKQRDFVFRKLKKVYGESSKDFIRLSLDDVTTYVNTKMTKGDASNLIFASSLAPVYPLKSLLRILEYQKRRSFIK</sequence>
<gene>
    <name type="primary">IRC3</name>
    <name type="ordered locus">YDR332W</name>
</gene>
<evidence type="ECO:0000255" key="1">
    <source>
        <dbReference type="PROSITE-ProRule" id="PRU00541"/>
    </source>
</evidence>
<evidence type="ECO:0000255" key="2">
    <source>
        <dbReference type="PROSITE-ProRule" id="PRU00542"/>
    </source>
</evidence>
<evidence type="ECO:0000269" key="3">
    <source>
    </source>
</evidence>
<evidence type="ECO:0000269" key="4">
    <source>
    </source>
</evidence>
<evidence type="ECO:0000305" key="5"/>
<proteinExistence type="evidence at protein level"/>
<feature type="chain" id="PRO_0000253816" description="Putative ATP-dependent helicase IRC3">
    <location>
        <begin position="1"/>
        <end position="689"/>
    </location>
</feature>
<feature type="domain" description="Helicase ATP-binding" evidence="1">
    <location>
        <begin position="46"/>
        <end position="211"/>
    </location>
</feature>
<feature type="domain" description="Helicase C-terminal" evidence="2">
    <location>
        <begin position="265"/>
        <end position="438"/>
    </location>
</feature>
<feature type="short sequence motif" description="DEAH box">
    <location>
        <begin position="158"/>
        <end position="161"/>
    </location>
</feature>
<feature type="binding site" evidence="1">
    <location>
        <begin position="59"/>
        <end position="66"/>
    </location>
    <ligand>
        <name>ATP</name>
        <dbReference type="ChEBI" id="CHEBI:30616"/>
    </ligand>
</feature>
<reference key="1">
    <citation type="journal article" date="1997" name="Nature">
        <title>The nucleotide sequence of Saccharomyces cerevisiae chromosome IV.</title>
        <authorList>
            <person name="Jacq C."/>
            <person name="Alt-Moerbe J."/>
            <person name="Andre B."/>
            <person name="Arnold W."/>
            <person name="Bahr A."/>
            <person name="Ballesta J.P.G."/>
            <person name="Bargues M."/>
            <person name="Baron L."/>
            <person name="Becker A."/>
            <person name="Biteau N."/>
            <person name="Bloecker H."/>
            <person name="Blugeon C."/>
            <person name="Boskovic J."/>
            <person name="Brandt P."/>
            <person name="Brueckner M."/>
            <person name="Buitrago M.J."/>
            <person name="Coster F."/>
            <person name="Delaveau T."/>
            <person name="del Rey F."/>
            <person name="Dujon B."/>
            <person name="Eide L.G."/>
            <person name="Garcia-Cantalejo J.M."/>
            <person name="Goffeau A."/>
            <person name="Gomez-Peris A."/>
            <person name="Granotier C."/>
            <person name="Hanemann V."/>
            <person name="Hankeln T."/>
            <person name="Hoheisel J.D."/>
            <person name="Jaeger W."/>
            <person name="Jimenez A."/>
            <person name="Jonniaux J.-L."/>
            <person name="Kraemer C."/>
            <person name="Kuester H."/>
            <person name="Laamanen P."/>
            <person name="Legros Y."/>
            <person name="Louis E.J."/>
            <person name="Moeller-Rieker S."/>
            <person name="Monnet A."/>
            <person name="Moro M."/>
            <person name="Mueller-Auer S."/>
            <person name="Nussbaumer B."/>
            <person name="Paricio N."/>
            <person name="Paulin L."/>
            <person name="Perea J."/>
            <person name="Perez-Alonso M."/>
            <person name="Perez-Ortin J.E."/>
            <person name="Pohl T.M."/>
            <person name="Prydz H."/>
            <person name="Purnelle B."/>
            <person name="Rasmussen S.W."/>
            <person name="Remacha M.A."/>
            <person name="Revuelta J.L."/>
            <person name="Rieger M."/>
            <person name="Salom D."/>
            <person name="Saluz H.P."/>
            <person name="Saiz J.E."/>
            <person name="Saren A.-M."/>
            <person name="Schaefer M."/>
            <person name="Scharfe M."/>
            <person name="Schmidt E.R."/>
            <person name="Schneider C."/>
            <person name="Scholler P."/>
            <person name="Schwarz S."/>
            <person name="Soler-Mira A."/>
            <person name="Urrestarazu L.A."/>
            <person name="Verhasselt P."/>
            <person name="Vissers S."/>
            <person name="Voet M."/>
            <person name="Volckaert G."/>
            <person name="Wagner G."/>
            <person name="Wambutt R."/>
            <person name="Wedler E."/>
            <person name="Wedler H."/>
            <person name="Woelfl S."/>
            <person name="Harris D.E."/>
            <person name="Bowman S."/>
            <person name="Brown D."/>
            <person name="Churcher C.M."/>
            <person name="Connor R."/>
            <person name="Dedman K."/>
            <person name="Gentles S."/>
            <person name="Hamlin N."/>
            <person name="Hunt S."/>
            <person name="Jones L."/>
            <person name="McDonald S."/>
            <person name="Murphy L.D."/>
            <person name="Niblett D."/>
            <person name="Odell C."/>
            <person name="Oliver K."/>
            <person name="Rajandream M.A."/>
            <person name="Richards C."/>
            <person name="Shore L."/>
            <person name="Walsh S.V."/>
            <person name="Barrell B.G."/>
            <person name="Dietrich F.S."/>
            <person name="Mulligan J.T."/>
            <person name="Allen E."/>
            <person name="Araujo R."/>
            <person name="Aviles E."/>
            <person name="Berno A."/>
            <person name="Carpenter J."/>
            <person name="Chen E."/>
            <person name="Cherry J.M."/>
            <person name="Chung E."/>
            <person name="Duncan M."/>
            <person name="Hunicke-Smith S."/>
            <person name="Hyman R.W."/>
            <person name="Komp C."/>
            <person name="Lashkari D."/>
            <person name="Lew H."/>
            <person name="Lin D."/>
            <person name="Mosedale D."/>
            <person name="Nakahara K."/>
            <person name="Namath A."/>
            <person name="Oefner P."/>
            <person name="Oh C."/>
            <person name="Petel F.X."/>
            <person name="Roberts D."/>
            <person name="Schramm S."/>
            <person name="Schroeder M."/>
            <person name="Shogren T."/>
            <person name="Shroff N."/>
            <person name="Winant A."/>
            <person name="Yelton M.A."/>
            <person name="Botstein D."/>
            <person name="Davis R.W."/>
            <person name="Johnston M."/>
            <person name="Andrews S."/>
            <person name="Brinkman R."/>
            <person name="Cooper J."/>
            <person name="Ding H."/>
            <person name="Du Z."/>
            <person name="Favello A."/>
            <person name="Fulton L."/>
            <person name="Gattung S."/>
            <person name="Greco T."/>
            <person name="Hallsworth K."/>
            <person name="Hawkins J."/>
            <person name="Hillier L.W."/>
            <person name="Jier M."/>
            <person name="Johnson D."/>
            <person name="Johnston L."/>
            <person name="Kirsten J."/>
            <person name="Kucaba T."/>
            <person name="Langston Y."/>
            <person name="Latreille P."/>
            <person name="Le T."/>
            <person name="Mardis E."/>
            <person name="Menezes S."/>
            <person name="Miller N."/>
            <person name="Nhan M."/>
            <person name="Pauley A."/>
            <person name="Peluso D."/>
            <person name="Rifkin L."/>
            <person name="Riles L."/>
            <person name="Taich A."/>
            <person name="Trevaskis E."/>
            <person name="Vignati D."/>
            <person name="Wilcox L."/>
            <person name="Wohldman P."/>
            <person name="Vaudin M."/>
            <person name="Wilson R."/>
            <person name="Waterston R."/>
            <person name="Albermann K."/>
            <person name="Hani J."/>
            <person name="Heumann K."/>
            <person name="Kleine K."/>
            <person name="Mewes H.-W."/>
            <person name="Zollner A."/>
            <person name="Zaccaria P."/>
        </authorList>
    </citation>
    <scope>NUCLEOTIDE SEQUENCE [LARGE SCALE GENOMIC DNA]</scope>
    <source>
        <strain>ATCC 204508 / S288c</strain>
    </source>
</reference>
<reference key="2">
    <citation type="journal article" date="2014" name="G3 (Bethesda)">
        <title>The reference genome sequence of Saccharomyces cerevisiae: Then and now.</title>
        <authorList>
            <person name="Engel S.R."/>
            <person name="Dietrich F.S."/>
            <person name="Fisk D.G."/>
            <person name="Binkley G."/>
            <person name="Balakrishnan R."/>
            <person name="Costanzo M.C."/>
            <person name="Dwight S.S."/>
            <person name="Hitz B.C."/>
            <person name="Karra K."/>
            <person name="Nash R.S."/>
            <person name="Weng S."/>
            <person name="Wong E.D."/>
            <person name="Lloyd P."/>
            <person name="Skrzypek M.S."/>
            <person name="Miyasato S.R."/>
            <person name="Simison M."/>
            <person name="Cherry J.M."/>
        </authorList>
    </citation>
    <scope>GENOME REANNOTATION</scope>
    <source>
        <strain>ATCC 204508 / S288c</strain>
    </source>
</reference>
<reference key="3">
    <citation type="journal article" date="2003" name="Nature">
        <title>Global analysis of protein localization in budding yeast.</title>
        <authorList>
            <person name="Huh W.-K."/>
            <person name="Falvo J.V."/>
            <person name="Gerke L.C."/>
            <person name="Carroll A.S."/>
            <person name="Howson R.W."/>
            <person name="Weissman J.S."/>
            <person name="O'Shea E.K."/>
        </authorList>
    </citation>
    <scope>SUBCELLULAR LOCATION [LARGE SCALE ANALYSIS]</scope>
</reference>
<reference key="4">
    <citation type="journal article" date="2003" name="Nature">
        <title>Global analysis of protein expression in yeast.</title>
        <authorList>
            <person name="Ghaemmaghami S."/>
            <person name="Huh W.-K."/>
            <person name="Bower K."/>
            <person name="Howson R.W."/>
            <person name="Belle A."/>
            <person name="Dephoure N."/>
            <person name="O'Shea E.K."/>
            <person name="Weissman J.S."/>
        </authorList>
    </citation>
    <scope>LEVEL OF PROTEIN EXPRESSION [LARGE SCALE ANALYSIS]</scope>
</reference>
<name>IRC3_YEAST</name>